<reference key="1">
    <citation type="journal article" date="1998" name="Mol. Phylogenet. Evol.">
        <title>The molecular phylogenetics of tuco-tucos (genus Ctenomys, Rodentia: Octodontidae) suggests an early burst of speciation.</title>
        <authorList>
            <person name="Lessa E.P."/>
            <person name="Cook J.A."/>
        </authorList>
    </citation>
    <scope>NUCLEOTIDE SEQUENCE [GENOMIC DNA]</scope>
    <source>
        <strain>Isolate NK 17519</strain>
        <strain>Isolate NK 17520</strain>
    </source>
</reference>
<sequence length="379" mass="42926">MTNIRKSHPLIKIINHSFIDLPAPSNISAWWNFGSLLGVCLMLQIITGLFLAMHYTADTTTAFSSVTHICRDVNYGWLIRYLHANGASMFFILLYLHIGRGIYYGSFTFMETWNIGVLLLFAVMATAFMGYVLPWGQMSFWGATVITNLLSAIPYIGPNLVEWIWGGFSVDKATLTRFFAFHFILPFIITAMVMIHLLFLHETGSNNPSGLNSDSDKIPFHPYYTIKDILGFLFMLLTLMTLVLFTPDLLGDPDNYTPANPLNTPPHIKPEWYFLFAYAILRSIPNKLGGVLALVLSILILMLFPMLHLSKQRSMSFRPLSQCLLWALVGNLIILTWIGGQPVEHPFITIGQLASAIYFFIILILMPTTSLMENKLLKW</sequence>
<protein>
    <recommendedName>
        <fullName>Cytochrome b</fullName>
    </recommendedName>
    <alternativeName>
        <fullName>Complex III subunit 3</fullName>
    </alternativeName>
    <alternativeName>
        <fullName>Complex III subunit III</fullName>
    </alternativeName>
    <alternativeName>
        <fullName>Cytochrome b-c1 complex subunit 3</fullName>
    </alternativeName>
    <alternativeName>
        <fullName>Ubiquinol-cytochrome-c reductase complex cytochrome b subunit</fullName>
    </alternativeName>
</protein>
<dbReference type="EMBL" id="AF007058">
    <property type="protein sequence ID" value="AAB69217.1"/>
    <property type="molecule type" value="Genomic_DNA"/>
</dbReference>
<dbReference type="EMBL" id="AF007059">
    <property type="protein sequence ID" value="AAB69218.1"/>
    <property type="molecule type" value="Genomic_DNA"/>
</dbReference>
<dbReference type="RefSeq" id="YP_007625561.1">
    <property type="nucleotide sequence ID" value="NC_020661.1"/>
</dbReference>
<dbReference type="SMR" id="O21807"/>
<dbReference type="GeneID" id="14864907"/>
<dbReference type="CTD" id="4519"/>
<dbReference type="OrthoDB" id="244at2759"/>
<dbReference type="Proteomes" id="UP000515203">
    <property type="component" value="Mitochondrion MT"/>
</dbReference>
<dbReference type="GO" id="GO:0005743">
    <property type="term" value="C:mitochondrial inner membrane"/>
    <property type="evidence" value="ECO:0007669"/>
    <property type="project" value="UniProtKB-SubCell"/>
</dbReference>
<dbReference type="GO" id="GO:0045275">
    <property type="term" value="C:respiratory chain complex III"/>
    <property type="evidence" value="ECO:0007669"/>
    <property type="project" value="InterPro"/>
</dbReference>
<dbReference type="GO" id="GO:0046872">
    <property type="term" value="F:metal ion binding"/>
    <property type="evidence" value="ECO:0007669"/>
    <property type="project" value="UniProtKB-KW"/>
</dbReference>
<dbReference type="GO" id="GO:0008121">
    <property type="term" value="F:ubiquinol-cytochrome-c reductase activity"/>
    <property type="evidence" value="ECO:0007669"/>
    <property type="project" value="InterPro"/>
</dbReference>
<dbReference type="GO" id="GO:0006122">
    <property type="term" value="P:mitochondrial electron transport, ubiquinol to cytochrome c"/>
    <property type="evidence" value="ECO:0007669"/>
    <property type="project" value="TreeGrafter"/>
</dbReference>
<dbReference type="CDD" id="cd00290">
    <property type="entry name" value="cytochrome_b_C"/>
    <property type="match status" value="1"/>
</dbReference>
<dbReference type="CDD" id="cd00284">
    <property type="entry name" value="Cytochrome_b_N"/>
    <property type="match status" value="1"/>
</dbReference>
<dbReference type="FunFam" id="1.20.810.10:FF:000002">
    <property type="entry name" value="Cytochrome b"/>
    <property type="match status" value="1"/>
</dbReference>
<dbReference type="Gene3D" id="1.20.810.10">
    <property type="entry name" value="Cytochrome Bc1 Complex, Chain C"/>
    <property type="match status" value="1"/>
</dbReference>
<dbReference type="InterPro" id="IPR005798">
    <property type="entry name" value="Cyt_b/b6_C"/>
</dbReference>
<dbReference type="InterPro" id="IPR036150">
    <property type="entry name" value="Cyt_b/b6_C_sf"/>
</dbReference>
<dbReference type="InterPro" id="IPR005797">
    <property type="entry name" value="Cyt_b/b6_N"/>
</dbReference>
<dbReference type="InterPro" id="IPR027387">
    <property type="entry name" value="Cytb/b6-like_sf"/>
</dbReference>
<dbReference type="InterPro" id="IPR030689">
    <property type="entry name" value="Cytochrome_b"/>
</dbReference>
<dbReference type="InterPro" id="IPR048260">
    <property type="entry name" value="Cytochrome_b_C_euk/bac"/>
</dbReference>
<dbReference type="InterPro" id="IPR048259">
    <property type="entry name" value="Cytochrome_b_N_euk/bac"/>
</dbReference>
<dbReference type="InterPro" id="IPR016174">
    <property type="entry name" value="Di-haem_cyt_TM"/>
</dbReference>
<dbReference type="PANTHER" id="PTHR19271">
    <property type="entry name" value="CYTOCHROME B"/>
    <property type="match status" value="1"/>
</dbReference>
<dbReference type="PANTHER" id="PTHR19271:SF16">
    <property type="entry name" value="CYTOCHROME B"/>
    <property type="match status" value="1"/>
</dbReference>
<dbReference type="Pfam" id="PF00032">
    <property type="entry name" value="Cytochrom_B_C"/>
    <property type="match status" value="1"/>
</dbReference>
<dbReference type="Pfam" id="PF00033">
    <property type="entry name" value="Cytochrome_B"/>
    <property type="match status" value="1"/>
</dbReference>
<dbReference type="PIRSF" id="PIRSF038885">
    <property type="entry name" value="COB"/>
    <property type="match status" value="1"/>
</dbReference>
<dbReference type="SUPFAM" id="SSF81648">
    <property type="entry name" value="a domain/subunit of cytochrome bc1 complex (Ubiquinol-cytochrome c reductase)"/>
    <property type="match status" value="1"/>
</dbReference>
<dbReference type="SUPFAM" id="SSF81342">
    <property type="entry name" value="Transmembrane di-heme cytochromes"/>
    <property type="match status" value="1"/>
</dbReference>
<dbReference type="PROSITE" id="PS51003">
    <property type="entry name" value="CYTB_CTER"/>
    <property type="match status" value="1"/>
</dbReference>
<dbReference type="PROSITE" id="PS51002">
    <property type="entry name" value="CYTB_NTER"/>
    <property type="match status" value="1"/>
</dbReference>
<geneLocation type="mitochondrion"/>
<proteinExistence type="inferred from homology"/>
<comment type="function">
    <text evidence="2">Component of the ubiquinol-cytochrome c reductase complex (complex III or cytochrome b-c1 complex) that is part of the mitochondrial respiratory chain. The b-c1 complex mediates electron transfer from ubiquinol to cytochrome c. Contributes to the generation of a proton gradient across the mitochondrial membrane that is then used for ATP synthesis.</text>
</comment>
<comment type="cofactor">
    <cofactor evidence="2">
        <name>heme b</name>
        <dbReference type="ChEBI" id="CHEBI:60344"/>
    </cofactor>
    <text evidence="2">Binds 2 heme b groups non-covalently.</text>
</comment>
<comment type="subunit">
    <text evidence="2">The cytochrome bc1 complex contains 11 subunits: 3 respiratory subunits (MT-CYB, CYC1 and UQCRFS1), 2 core proteins (UQCRC1 and UQCRC2) and 6 low-molecular weight proteins (UQCRH/QCR6, UQCRB/QCR7, UQCRQ/QCR8, UQCR10/QCR9, UQCR11/QCR10 and a cleavage product of UQCRFS1). This cytochrome bc1 complex then forms a dimer.</text>
</comment>
<comment type="subcellular location">
    <subcellularLocation>
        <location evidence="2">Mitochondrion inner membrane</location>
        <topology evidence="2">Multi-pass membrane protein</topology>
    </subcellularLocation>
</comment>
<comment type="miscellaneous">
    <text evidence="1">Heme 1 (or BL or b562) is low-potential and absorbs at about 562 nm, and heme 2 (or BH or b566) is high-potential and absorbs at about 566 nm.</text>
</comment>
<comment type="similarity">
    <text evidence="3 4">Belongs to the cytochrome b family.</text>
</comment>
<comment type="caution">
    <text evidence="2">The full-length protein contains only eight transmembrane helices, not nine as predicted by bioinformatics tools.</text>
</comment>
<gene>
    <name type="primary">MT-CYB</name>
    <name type="synonym">COB</name>
    <name type="synonym">CYTB</name>
    <name type="synonym">MTCYB</name>
</gene>
<accession>O21807</accession>
<name>CYB_OCTDE</name>
<feature type="chain" id="PRO_0000061311" description="Cytochrome b">
    <location>
        <begin position="1"/>
        <end position="379"/>
    </location>
</feature>
<feature type="transmembrane region" description="Helical" evidence="2">
    <location>
        <begin position="33"/>
        <end position="53"/>
    </location>
</feature>
<feature type="transmembrane region" description="Helical" evidence="2">
    <location>
        <begin position="77"/>
        <end position="98"/>
    </location>
</feature>
<feature type="transmembrane region" description="Helical" evidence="2">
    <location>
        <begin position="113"/>
        <end position="133"/>
    </location>
</feature>
<feature type="transmembrane region" description="Helical" evidence="2">
    <location>
        <begin position="178"/>
        <end position="198"/>
    </location>
</feature>
<feature type="transmembrane region" description="Helical" evidence="2">
    <location>
        <begin position="226"/>
        <end position="246"/>
    </location>
</feature>
<feature type="transmembrane region" description="Helical" evidence="2">
    <location>
        <begin position="288"/>
        <end position="308"/>
    </location>
</feature>
<feature type="transmembrane region" description="Helical" evidence="2">
    <location>
        <begin position="320"/>
        <end position="340"/>
    </location>
</feature>
<feature type="transmembrane region" description="Helical" evidence="2">
    <location>
        <begin position="347"/>
        <end position="367"/>
    </location>
</feature>
<feature type="binding site" description="axial binding residue" evidence="2">
    <location>
        <position position="83"/>
    </location>
    <ligand>
        <name>heme b</name>
        <dbReference type="ChEBI" id="CHEBI:60344"/>
        <label>b562</label>
    </ligand>
    <ligandPart>
        <name>Fe</name>
        <dbReference type="ChEBI" id="CHEBI:18248"/>
    </ligandPart>
</feature>
<feature type="binding site" description="axial binding residue" evidence="2">
    <location>
        <position position="97"/>
    </location>
    <ligand>
        <name>heme b</name>
        <dbReference type="ChEBI" id="CHEBI:60344"/>
        <label>b566</label>
    </ligand>
    <ligandPart>
        <name>Fe</name>
        <dbReference type="ChEBI" id="CHEBI:18248"/>
    </ligandPart>
</feature>
<feature type="binding site" description="axial binding residue" evidence="2">
    <location>
        <position position="182"/>
    </location>
    <ligand>
        <name>heme b</name>
        <dbReference type="ChEBI" id="CHEBI:60344"/>
        <label>b562</label>
    </ligand>
    <ligandPart>
        <name>Fe</name>
        <dbReference type="ChEBI" id="CHEBI:18248"/>
    </ligandPart>
</feature>
<feature type="binding site" description="axial binding residue" evidence="2">
    <location>
        <position position="196"/>
    </location>
    <ligand>
        <name>heme b</name>
        <dbReference type="ChEBI" id="CHEBI:60344"/>
        <label>b566</label>
    </ligand>
    <ligandPart>
        <name>Fe</name>
        <dbReference type="ChEBI" id="CHEBI:18248"/>
    </ligandPart>
</feature>
<feature type="binding site" evidence="2">
    <location>
        <position position="201"/>
    </location>
    <ligand>
        <name>a ubiquinone</name>
        <dbReference type="ChEBI" id="CHEBI:16389"/>
    </ligand>
</feature>
<evidence type="ECO:0000250" key="1"/>
<evidence type="ECO:0000250" key="2">
    <source>
        <dbReference type="UniProtKB" id="P00157"/>
    </source>
</evidence>
<evidence type="ECO:0000255" key="3">
    <source>
        <dbReference type="PROSITE-ProRule" id="PRU00967"/>
    </source>
</evidence>
<evidence type="ECO:0000255" key="4">
    <source>
        <dbReference type="PROSITE-ProRule" id="PRU00968"/>
    </source>
</evidence>
<organism>
    <name type="scientific">Octodon degus</name>
    <name type="common">Degu</name>
    <name type="synonym">Sciurus degus</name>
    <dbReference type="NCBI Taxonomy" id="10160"/>
    <lineage>
        <taxon>Eukaryota</taxon>
        <taxon>Metazoa</taxon>
        <taxon>Chordata</taxon>
        <taxon>Craniata</taxon>
        <taxon>Vertebrata</taxon>
        <taxon>Euteleostomi</taxon>
        <taxon>Mammalia</taxon>
        <taxon>Eutheria</taxon>
        <taxon>Euarchontoglires</taxon>
        <taxon>Glires</taxon>
        <taxon>Rodentia</taxon>
        <taxon>Hystricomorpha</taxon>
        <taxon>Octodontidae</taxon>
        <taxon>Octodon</taxon>
    </lineage>
</organism>
<keyword id="KW-0249">Electron transport</keyword>
<keyword id="KW-0349">Heme</keyword>
<keyword id="KW-0408">Iron</keyword>
<keyword id="KW-0472">Membrane</keyword>
<keyword id="KW-0479">Metal-binding</keyword>
<keyword id="KW-0496">Mitochondrion</keyword>
<keyword id="KW-0999">Mitochondrion inner membrane</keyword>
<keyword id="KW-1185">Reference proteome</keyword>
<keyword id="KW-0679">Respiratory chain</keyword>
<keyword id="KW-0812">Transmembrane</keyword>
<keyword id="KW-1133">Transmembrane helix</keyword>
<keyword id="KW-0813">Transport</keyword>
<keyword id="KW-0830">Ubiquinone</keyword>